<proteinExistence type="inferred from homology"/>
<sequence>MRVLHVCSELFPLLKTGGLADVIGALPAAQLAEGADVRIILPAFPDLRRGIPETVLVREIDTFAGRVALRYGHYRGIGIYLIDAPALYDRAGSPYHDASLYAYSDNYQRFALLGWMACELACGLDGYWRPEVVHAHDWHAGLTCAYLAARGRPARSVFTVHNLAYQGLFSAHHLSELQLPAEFFQIYGLEFYGQISYLKAGLFFADHVTTVSPTYAKEITQPAFGYGMEGLLQALAHQGRLTGILNGVDSDIWDPQSDTLLPTRYDAENLQAKAINKTHLQTAMGLQLTESKPIFAVVSRLTAQKGLDLVLEALPELLALGGQLVVLGSGDTTLQEAFLAAAAEHSGQVGVQIGYHEAFSHRIIAGSDVILVPSRFEPCGLTQLYGLKYGTLPLVRHTGGLADTVVDCALENLADGSASGFVFNECEAQALVKAIRRAFVLWSRPKHWRHVQRHAMRLDFGWQLAAVDYLSLYRRL</sequence>
<gene>
    <name evidence="1" type="primary">glgA</name>
    <name type="ordered locus">YpsIP31758_4003</name>
</gene>
<keyword id="KW-0320">Glycogen biosynthesis</keyword>
<keyword id="KW-0328">Glycosyltransferase</keyword>
<keyword id="KW-0808">Transferase</keyword>
<feature type="chain" id="PRO_1000060436" description="Glycogen synthase">
    <location>
        <begin position="1"/>
        <end position="476"/>
    </location>
</feature>
<feature type="binding site" evidence="1">
    <location>
        <position position="15"/>
    </location>
    <ligand>
        <name>ADP-alpha-D-glucose</name>
        <dbReference type="ChEBI" id="CHEBI:57498"/>
    </ligand>
</feature>
<protein>
    <recommendedName>
        <fullName evidence="1">Glycogen synthase</fullName>
        <ecNumber evidence="1">2.4.1.21</ecNumber>
    </recommendedName>
    <alternativeName>
        <fullName evidence="1">Starch [bacterial glycogen] synthase</fullName>
    </alternativeName>
</protein>
<name>GLGA_YERP3</name>
<organism>
    <name type="scientific">Yersinia pseudotuberculosis serotype O:1b (strain IP 31758)</name>
    <dbReference type="NCBI Taxonomy" id="349747"/>
    <lineage>
        <taxon>Bacteria</taxon>
        <taxon>Pseudomonadati</taxon>
        <taxon>Pseudomonadota</taxon>
        <taxon>Gammaproteobacteria</taxon>
        <taxon>Enterobacterales</taxon>
        <taxon>Yersiniaceae</taxon>
        <taxon>Yersinia</taxon>
    </lineage>
</organism>
<dbReference type="EC" id="2.4.1.21" evidence="1"/>
<dbReference type="EMBL" id="CP000720">
    <property type="protein sequence ID" value="ABS46461.1"/>
    <property type="molecule type" value="Genomic_DNA"/>
</dbReference>
<dbReference type="RefSeq" id="WP_012105898.1">
    <property type="nucleotide sequence ID" value="NC_009708.1"/>
</dbReference>
<dbReference type="SMR" id="A7FNX2"/>
<dbReference type="CAZy" id="GT5">
    <property type="family name" value="Glycosyltransferase Family 5"/>
</dbReference>
<dbReference type="KEGG" id="ypi:YpsIP31758_4003"/>
<dbReference type="HOGENOM" id="CLU_009583_18_4_6"/>
<dbReference type="UniPathway" id="UPA00164"/>
<dbReference type="Proteomes" id="UP000002412">
    <property type="component" value="Chromosome"/>
</dbReference>
<dbReference type="GO" id="GO:0005829">
    <property type="term" value="C:cytosol"/>
    <property type="evidence" value="ECO:0007669"/>
    <property type="project" value="TreeGrafter"/>
</dbReference>
<dbReference type="GO" id="GO:0009011">
    <property type="term" value="F:alpha-1,4-glucan glucosyltransferase (ADP-glucose donor) activity"/>
    <property type="evidence" value="ECO:0007669"/>
    <property type="project" value="UniProtKB-UniRule"/>
</dbReference>
<dbReference type="GO" id="GO:0004373">
    <property type="term" value="F:alpha-1,4-glucan glucosyltransferase (UDP-glucose donor) activity"/>
    <property type="evidence" value="ECO:0007669"/>
    <property type="project" value="InterPro"/>
</dbReference>
<dbReference type="GO" id="GO:0005978">
    <property type="term" value="P:glycogen biosynthetic process"/>
    <property type="evidence" value="ECO:0007669"/>
    <property type="project" value="UniProtKB-UniRule"/>
</dbReference>
<dbReference type="CDD" id="cd03791">
    <property type="entry name" value="GT5_Glycogen_synthase_DULL1-like"/>
    <property type="match status" value="1"/>
</dbReference>
<dbReference type="FunFam" id="3.40.50.2000:FF:000011">
    <property type="entry name" value="Glycogen synthase"/>
    <property type="match status" value="1"/>
</dbReference>
<dbReference type="Gene3D" id="3.40.50.2000">
    <property type="entry name" value="Glycogen Phosphorylase B"/>
    <property type="match status" value="2"/>
</dbReference>
<dbReference type="HAMAP" id="MF_00484">
    <property type="entry name" value="Glycogen_synth"/>
    <property type="match status" value="1"/>
</dbReference>
<dbReference type="InterPro" id="IPR001296">
    <property type="entry name" value="Glyco_trans_1"/>
</dbReference>
<dbReference type="InterPro" id="IPR011835">
    <property type="entry name" value="GS/SS"/>
</dbReference>
<dbReference type="InterPro" id="IPR013534">
    <property type="entry name" value="Starch_synth_cat_dom"/>
</dbReference>
<dbReference type="NCBIfam" id="TIGR02095">
    <property type="entry name" value="glgA"/>
    <property type="match status" value="1"/>
</dbReference>
<dbReference type="NCBIfam" id="NF001899">
    <property type="entry name" value="PRK00654.1-2"/>
    <property type="match status" value="1"/>
</dbReference>
<dbReference type="PANTHER" id="PTHR45825:SF11">
    <property type="entry name" value="ALPHA AMYLASE DOMAIN-CONTAINING PROTEIN"/>
    <property type="match status" value="1"/>
</dbReference>
<dbReference type="PANTHER" id="PTHR45825">
    <property type="entry name" value="GRANULE-BOUND STARCH SYNTHASE 1, CHLOROPLASTIC/AMYLOPLASTIC"/>
    <property type="match status" value="1"/>
</dbReference>
<dbReference type="Pfam" id="PF08323">
    <property type="entry name" value="Glyco_transf_5"/>
    <property type="match status" value="1"/>
</dbReference>
<dbReference type="Pfam" id="PF00534">
    <property type="entry name" value="Glycos_transf_1"/>
    <property type="match status" value="1"/>
</dbReference>
<dbReference type="SUPFAM" id="SSF53756">
    <property type="entry name" value="UDP-Glycosyltransferase/glycogen phosphorylase"/>
    <property type="match status" value="1"/>
</dbReference>
<reference key="1">
    <citation type="journal article" date="2007" name="PLoS Genet.">
        <title>The complete genome sequence of Yersinia pseudotuberculosis IP31758, the causative agent of Far East scarlet-like fever.</title>
        <authorList>
            <person name="Eppinger M."/>
            <person name="Rosovitz M.J."/>
            <person name="Fricke W.F."/>
            <person name="Rasko D.A."/>
            <person name="Kokorina G."/>
            <person name="Fayolle C."/>
            <person name="Lindler L.E."/>
            <person name="Carniel E."/>
            <person name="Ravel J."/>
        </authorList>
    </citation>
    <scope>NUCLEOTIDE SEQUENCE [LARGE SCALE GENOMIC DNA]</scope>
    <source>
        <strain>IP 31758</strain>
    </source>
</reference>
<comment type="function">
    <text evidence="1">Synthesizes alpha-1,4-glucan chains using ADP-glucose.</text>
</comment>
<comment type="catalytic activity">
    <reaction evidence="1">
        <text>[(1-&gt;4)-alpha-D-glucosyl](n) + ADP-alpha-D-glucose = [(1-&gt;4)-alpha-D-glucosyl](n+1) + ADP + H(+)</text>
        <dbReference type="Rhea" id="RHEA:18189"/>
        <dbReference type="Rhea" id="RHEA-COMP:9584"/>
        <dbReference type="Rhea" id="RHEA-COMP:9587"/>
        <dbReference type="ChEBI" id="CHEBI:15378"/>
        <dbReference type="ChEBI" id="CHEBI:15444"/>
        <dbReference type="ChEBI" id="CHEBI:57498"/>
        <dbReference type="ChEBI" id="CHEBI:456216"/>
        <dbReference type="EC" id="2.4.1.21"/>
    </reaction>
</comment>
<comment type="pathway">
    <text evidence="1">Glycan biosynthesis; glycogen biosynthesis.</text>
</comment>
<comment type="similarity">
    <text evidence="1">Belongs to the glycosyltransferase 1 family. Bacterial/plant glycogen synthase subfamily.</text>
</comment>
<evidence type="ECO:0000255" key="1">
    <source>
        <dbReference type="HAMAP-Rule" id="MF_00484"/>
    </source>
</evidence>
<accession>A7FNX2</accession>